<protein>
    <recommendedName>
        <fullName evidence="1">Leucine--tRNA ligase</fullName>
        <ecNumber evidence="1">6.1.1.4</ecNumber>
    </recommendedName>
    <alternativeName>
        <fullName evidence="1">Leucyl-tRNA synthetase</fullName>
        <shortName evidence="1">LeuRS</shortName>
    </alternativeName>
</protein>
<proteinExistence type="inferred from homology"/>
<sequence length="987" mass="110295">MSDNEKSTQTEEPNFRYNAALAQDIENKWQKIWDEQGTFWAANVNGDLKDGKGRNAEGRTAYFAMDMFPYPSGKGLHVGHPLGYLASDVVSRYHRMKGENVLHAMGYDAFGLPAEQYAVQTGQHPRVTTEANIANMSRQLHRMGLSFDNRRTFATIDPGYVRWTQWIFSRIYDSWYDEDATNPSGSKGSARPIAELVAKFESGEKAIPGHESDGKQWSDLTDAEQQDILNDFRLAYISKSPVNWCPGLGTVLANEEVTAEGKSERGNFPVFQRELRQWSMRITKYGHRLIADLDGINWPEKVKLMQRNWIGESHGASVHFIVATADGDKDMEIYTTRPDTLFGTTFAVVSPEHHLLENVPAEWPADVPEDWKGGYANPVEAVKAYRLAAEAKTAKDRVNEAGEKTGLFTGLYATNPITGAKLPLFTADYVLMDYGTGAIMAVPGGDQRDYDFAVKFGLPVIYTVTPLPDSGDDLANYEGKAPFVSHDGIVINSSVEATEAKGDALSLNGLRVDDAIAKVNAWLESAGVGKGTVSYRLRDWLFSRQRYWGEPFPIVYGEDGTPHLLPDSALPINLPDVPDYEPRTFDPMDAESNPEAPLSRNEDWVKVELDLGDGKKTYYRDTNTMPNWAGSCWYYMRYIDPTDTKHMVEKDEFDYWMGPNHNKYSGDEGGVDLYIGGVEHAVLHLLYSRFWHKVLFDLGYVDSAEPFHKLFNQGMIQAYAYTDDRGQYVPADEVVEGPADASGEPTFTWNGEHANREFGKMGKSLKNIVTPDYMYENYGADTFRLYEMSMGPLDESRPWNTRNVVGGMRFLQRLWRNVVDETTGQAHVTEDTPDEKTLKLLNNTIAEVTAEMEGMRPNTAIAKLIVLNNHLTGLKAVPRAAVEPLILMLAPIAPHICEEMWSKLGHAESLSAEPWPVADERYVGHDTVTAVVQIKGKVRAKLEVPVDIDPADLEKQALAAVADRLGGKEPRKVIVKAPKIVSIVPAE</sequence>
<comment type="catalytic activity">
    <reaction evidence="1">
        <text>tRNA(Leu) + L-leucine + ATP = L-leucyl-tRNA(Leu) + AMP + diphosphate</text>
        <dbReference type="Rhea" id="RHEA:11688"/>
        <dbReference type="Rhea" id="RHEA-COMP:9613"/>
        <dbReference type="Rhea" id="RHEA-COMP:9622"/>
        <dbReference type="ChEBI" id="CHEBI:30616"/>
        <dbReference type="ChEBI" id="CHEBI:33019"/>
        <dbReference type="ChEBI" id="CHEBI:57427"/>
        <dbReference type="ChEBI" id="CHEBI:78442"/>
        <dbReference type="ChEBI" id="CHEBI:78494"/>
        <dbReference type="ChEBI" id="CHEBI:456215"/>
        <dbReference type="EC" id="6.1.1.4"/>
    </reaction>
</comment>
<comment type="subcellular location">
    <subcellularLocation>
        <location evidence="1">Cytoplasm</location>
    </subcellularLocation>
</comment>
<comment type="similarity">
    <text evidence="1">Belongs to the class-I aminoacyl-tRNA synthetase family.</text>
</comment>
<accession>Q8G4D8</accession>
<organism>
    <name type="scientific">Bifidobacterium longum (strain NCC 2705)</name>
    <dbReference type="NCBI Taxonomy" id="206672"/>
    <lineage>
        <taxon>Bacteria</taxon>
        <taxon>Bacillati</taxon>
        <taxon>Actinomycetota</taxon>
        <taxon>Actinomycetes</taxon>
        <taxon>Bifidobacteriales</taxon>
        <taxon>Bifidobacteriaceae</taxon>
        <taxon>Bifidobacterium</taxon>
    </lineage>
</organism>
<evidence type="ECO:0000255" key="1">
    <source>
        <dbReference type="HAMAP-Rule" id="MF_00049"/>
    </source>
</evidence>
<keyword id="KW-0030">Aminoacyl-tRNA synthetase</keyword>
<keyword id="KW-0067">ATP-binding</keyword>
<keyword id="KW-0963">Cytoplasm</keyword>
<keyword id="KW-0436">Ligase</keyword>
<keyword id="KW-0547">Nucleotide-binding</keyword>
<keyword id="KW-0648">Protein biosynthesis</keyword>
<keyword id="KW-1185">Reference proteome</keyword>
<reference key="1">
    <citation type="journal article" date="2002" name="Proc. Natl. Acad. Sci. U.S.A.">
        <title>The genome sequence of Bifidobacterium longum reflects its adaptation to the human gastrointestinal tract.</title>
        <authorList>
            <person name="Schell M.A."/>
            <person name="Karmirantzou M."/>
            <person name="Snel B."/>
            <person name="Vilanova D."/>
            <person name="Berger B."/>
            <person name="Pessi G."/>
            <person name="Zwahlen M.-C."/>
            <person name="Desiere F."/>
            <person name="Bork P."/>
            <person name="Delley M."/>
            <person name="Pridmore R.D."/>
            <person name="Arigoni F."/>
        </authorList>
    </citation>
    <scope>NUCLEOTIDE SEQUENCE [LARGE SCALE GENOMIC DNA]</scope>
    <source>
        <strain>NCC 2705</strain>
    </source>
</reference>
<name>SYL_BIFLO</name>
<dbReference type="EC" id="6.1.1.4" evidence="1"/>
<dbReference type="EMBL" id="AE014295">
    <property type="protein sequence ID" value="AAN25245.1"/>
    <property type="molecule type" value="Genomic_DNA"/>
</dbReference>
<dbReference type="RefSeq" id="NP_696609.1">
    <property type="nucleotide sequence ID" value="NC_004307.2"/>
</dbReference>
<dbReference type="RefSeq" id="WP_011068058.1">
    <property type="nucleotide sequence ID" value="NC_004307.2"/>
</dbReference>
<dbReference type="SMR" id="Q8G4D8"/>
<dbReference type="STRING" id="206672.BL1450"/>
<dbReference type="EnsemblBacteria" id="AAN25245">
    <property type="protein sequence ID" value="AAN25245"/>
    <property type="gene ID" value="BL1450"/>
</dbReference>
<dbReference type="KEGG" id="blo:BL1450"/>
<dbReference type="PATRIC" id="fig|206672.9.peg.308"/>
<dbReference type="HOGENOM" id="CLU_004427_0_0_11"/>
<dbReference type="OrthoDB" id="9810365at2"/>
<dbReference type="PhylomeDB" id="Q8G4D8"/>
<dbReference type="Proteomes" id="UP000000439">
    <property type="component" value="Chromosome"/>
</dbReference>
<dbReference type="GO" id="GO:0005829">
    <property type="term" value="C:cytosol"/>
    <property type="evidence" value="ECO:0007669"/>
    <property type="project" value="TreeGrafter"/>
</dbReference>
<dbReference type="GO" id="GO:0002161">
    <property type="term" value="F:aminoacyl-tRNA deacylase activity"/>
    <property type="evidence" value="ECO:0007669"/>
    <property type="project" value="InterPro"/>
</dbReference>
<dbReference type="GO" id="GO:0005524">
    <property type="term" value="F:ATP binding"/>
    <property type="evidence" value="ECO:0007669"/>
    <property type="project" value="UniProtKB-UniRule"/>
</dbReference>
<dbReference type="GO" id="GO:0004823">
    <property type="term" value="F:leucine-tRNA ligase activity"/>
    <property type="evidence" value="ECO:0007669"/>
    <property type="project" value="UniProtKB-UniRule"/>
</dbReference>
<dbReference type="GO" id="GO:0006429">
    <property type="term" value="P:leucyl-tRNA aminoacylation"/>
    <property type="evidence" value="ECO:0007669"/>
    <property type="project" value="UniProtKB-UniRule"/>
</dbReference>
<dbReference type="CDD" id="cd07958">
    <property type="entry name" value="Anticodon_Ia_Leu_BEm"/>
    <property type="match status" value="1"/>
</dbReference>
<dbReference type="FunFam" id="3.40.50.620:FF:000056">
    <property type="entry name" value="Leucine--tRNA ligase"/>
    <property type="match status" value="1"/>
</dbReference>
<dbReference type="FunFam" id="3.40.50.620:FF:000060">
    <property type="entry name" value="Leucine--tRNA ligase"/>
    <property type="match status" value="1"/>
</dbReference>
<dbReference type="FunFam" id="3.40.50.620:FF:000087">
    <property type="entry name" value="Leucine--tRNA ligase"/>
    <property type="match status" value="1"/>
</dbReference>
<dbReference type="FunFam" id="1.10.730.10:FF:000011">
    <property type="entry name" value="Leucine--tRNA ligase chloroplastic/mitochondrial"/>
    <property type="match status" value="1"/>
</dbReference>
<dbReference type="Gene3D" id="3.40.50.620">
    <property type="entry name" value="HUPs"/>
    <property type="match status" value="3"/>
</dbReference>
<dbReference type="Gene3D" id="1.10.730.10">
    <property type="entry name" value="Isoleucyl-tRNA Synthetase, Domain 1"/>
    <property type="match status" value="1"/>
</dbReference>
<dbReference type="Gene3D" id="3.90.740.10">
    <property type="entry name" value="Valyl/Leucyl/Isoleucyl-tRNA synthetase, editing domain"/>
    <property type="match status" value="1"/>
</dbReference>
<dbReference type="HAMAP" id="MF_00049_B">
    <property type="entry name" value="Leu_tRNA_synth_B"/>
    <property type="match status" value="1"/>
</dbReference>
<dbReference type="InterPro" id="IPR001412">
    <property type="entry name" value="aa-tRNA-synth_I_CS"/>
</dbReference>
<dbReference type="InterPro" id="IPR002302">
    <property type="entry name" value="Leu-tRNA-ligase"/>
</dbReference>
<dbReference type="InterPro" id="IPR025709">
    <property type="entry name" value="Leu_tRNA-synth_edit"/>
</dbReference>
<dbReference type="InterPro" id="IPR013155">
    <property type="entry name" value="M/V/L/I-tRNA-synth_anticd-bd"/>
</dbReference>
<dbReference type="InterPro" id="IPR015413">
    <property type="entry name" value="Methionyl/Leucyl_tRNA_Synth"/>
</dbReference>
<dbReference type="InterPro" id="IPR014729">
    <property type="entry name" value="Rossmann-like_a/b/a_fold"/>
</dbReference>
<dbReference type="InterPro" id="IPR009080">
    <property type="entry name" value="tRNAsynth_Ia_anticodon-bd"/>
</dbReference>
<dbReference type="InterPro" id="IPR009008">
    <property type="entry name" value="Val/Leu/Ile-tRNA-synth_edit"/>
</dbReference>
<dbReference type="NCBIfam" id="TIGR00396">
    <property type="entry name" value="leuS_bact"/>
    <property type="match status" value="1"/>
</dbReference>
<dbReference type="PANTHER" id="PTHR43740:SF2">
    <property type="entry name" value="LEUCINE--TRNA LIGASE, MITOCHONDRIAL"/>
    <property type="match status" value="1"/>
</dbReference>
<dbReference type="PANTHER" id="PTHR43740">
    <property type="entry name" value="LEUCYL-TRNA SYNTHETASE"/>
    <property type="match status" value="1"/>
</dbReference>
<dbReference type="Pfam" id="PF08264">
    <property type="entry name" value="Anticodon_1"/>
    <property type="match status" value="1"/>
</dbReference>
<dbReference type="Pfam" id="PF13603">
    <property type="entry name" value="tRNA-synt_1_2"/>
    <property type="match status" value="1"/>
</dbReference>
<dbReference type="Pfam" id="PF09334">
    <property type="entry name" value="tRNA-synt_1g"/>
    <property type="match status" value="1"/>
</dbReference>
<dbReference type="PRINTS" id="PR00985">
    <property type="entry name" value="TRNASYNTHLEU"/>
</dbReference>
<dbReference type="SUPFAM" id="SSF47323">
    <property type="entry name" value="Anticodon-binding domain of a subclass of class I aminoacyl-tRNA synthetases"/>
    <property type="match status" value="1"/>
</dbReference>
<dbReference type="SUPFAM" id="SSF52374">
    <property type="entry name" value="Nucleotidylyl transferase"/>
    <property type="match status" value="1"/>
</dbReference>
<dbReference type="SUPFAM" id="SSF50677">
    <property type="entry name" value="ValRS/IleRS/LeuRS editing domain"/>
    <property type="match status" value="1"/>
</dbReference>
<dbReference type="PROSITE" id="PS00178">
    <property type="entry name" value="AA_TRNA_LIGASE_I"/>
    <property type="match status" value="1"/>
</dbReference>
<gene>
    <name evidence="1" type="primary">leuS</name>
    <name type="ordered locus">BL1450</name>
</gene>
<feature type="chain" id="PRO_0000151978" description="Leucine--tRNA ligase">
    <location>
        <begin position="1"/>
        <end position="987"/>
    </location>
</feature>
<feature type="short sequence motif" description="'HIGH' region">
    <location>
        <begin position="69"/>
        <end position="80"/>
    </location>
</feature>
<feature type="short sequence motif" description="'KMSKS' region">
    <location>
        <begin position="760"/>
        <end position="764"/>
    </location>
</feature>
<feature type="binding site" evidence="1">
    <location>
        <position position="763"/>
    </location>
    <ligand>
        <name>ATP</name>
        <dbReference type="ChEBI" id="CHEBI:30616"/>
    </ligand>
</feature>